<reference evidence="7" key="1">
    <citation type="journal article" date="2000" name="Science">
        <title>The genome sequence of Drosophila melanogaster.</title>
        <authorList>
            <person name="Adams M.D."/>
            <person name="Celniker S.E."/>
            <person name="Holt R.A."/>
            <person name="Evans C.A."/>
            <person name="Gocayne J.D."/>
            <person name="Amanatides P.G."/>
            <person name="Scherer S.E."/>
            <person name="Li P.W."/>
            <person name="Hoskins R.A."/>
            <person name="Galle R.F."/>
            <person name="George R.A."/>
            <person name="Lewis S.E."/>
            <person name="Richards S."/>
            <person name="Ashburner M."/>
            <person name="Henderson S.N."/>
            <person name="Sutton G.G."/>
            <person name="Wortman J.R."/>
            <person name="Yandell M.D."/>
            <person name="Zhang Q."/>
            <person name="Chen L.X."/>
            <person name="Brandon R.C."/>
            <person name="Rogers Y.-H.C."/>
            <person name="Blazej R.G."/>
            <person name="Champe M."/>
            <person name="Pfeiffer B.D."/>
            <person name="Wan K.H."/>
            <person name="Doyle C."/>
            <person name="Baxter E.G."/>
            <person name="Helt G."/>
            <person name="Nelson C.R."/>
            <person name="Miklos G.L.G."/>
            <person name="Abril J.F."/>
            <person name="Agbayani A."/>
            <person name="An H.-J."/>
            <person name="Andrews-Pfannkoch C."/>
            <person name="Baldwin D."/>
            <person name="Ballew R.M."/>
            <person name="Basu A."/>
            <person name="Baxendale J."/>
            <person name="Bayraktaroglu L."/>
            <person name="Beasley E.M."/>
            <person name="Beeson K.Y."/>
            <person name="Benos P.V."/>
            <person name="Berman B.P."/>
            <person name="Bhandari D."/>
            <person name="Bolshakov S."/>
            <person name="Borkova D."/>
            <person name="Botchan M.R."/>
            <person name="Bouck J."/>
            <person name="Brokstein P."/>
            <person name="Brottier P."/>
            <person name="Burtis K.C."/>
            <person name="Busam D.A."/>
            <person name="Butler H."/>
            <person name="Cadieu E."/>
            <person name="Center A."/>
            <person name="Chandra I."/>
            <person name="Cherry J.M."/>
            <person name="Cawley S."/>
            <person name="Dahlke C."/>
            <person name="Davenport L.B."/>
            <person name="Davies P."/>
            <person name="de Pablos B."/>
            <person name="Delcher A."/>
            <person name="Deng Z."/>
            <person name="Mays A.D."/>
            <person name="Dew I."/>
            <person name="Dietz S.M."/>
            <person name="Dodson K."/>
            <person name="Doup L.E."/>
            <person name="Downes M."/>
            <person name="Dugan-Rocha S."/>
            <person name="Dunkov B.C."/>
            <person name="Dunn P."/>
            <person name="Durbin K.J."/>
            <person name="Evangelista C.C."/>
            <person name="Ferraz C."/>
            <person name="Ferriera S."/>
            <person name="Fleischmann W."/>
            <person name="Fosler C."/>
            <person name="Gabrielian A.E."/>
            <person name="Garg N.S."/>
            <person name="Gelbart W.M."/>
            <person name="Glasser K."/>
            <person name="Glodek A."/>
            <person name="Gong F."/>
            <person name="Gorrell J.H."/>
            <person name="Gu Z."/>
            <person name="Guan P."/>
            <person name="Harris M."/>
            <person name="Harris N.L."/>
            <person name="Harvey D.A."/>
            <person name="Heiman T.J."/>
            <person name="Hernandez J.R."/>
            <person name="Houck J."/>
            <person name="Hostin D."/>
            <person name="Houston K.A."/>
            <person name="Howland T.J."/>
            <person name="Wei M.-H."/>
            <person name="Ibegwam C."/>
            <person name="Jalali M."/>
            <person name="Kalush F."/>
            <person name="Karpen G.H."/>
            <person name="Ke Z."/>
            <person name="Kennison J.A."/>
            <person name="Ketchum K.A."/>
            <person name="Kimmel B.E."/>
            <person name="Kodira C.D."/>
            <person name="Kraft C.L."/>
            <person name="Kravitz S."/>
            <person name="Kulp D."/>
            <person name="Lai Z."/>
            <person name="Lasko P."/>
            <person name="Lei Y."/>
            <person name="Levitsky A.A."/>
            <person name="Li J.H."/>
            <person name="Li Z."/>
            <person name="Liang Y."/>
            <person name="Lin X."/>
            <person name="Liu X."/>
            <person name="Mattei B."/>
            <person name="McIntosh T.C."/>
            <person name="McLeod M.P."/>
            <person name="McPherson D."/>
            <person name="Merkulov G."/>
            <person name="Milshina N.V."/>
            <person name="Mobarry C."/>
            <person name="Morris J."/>
            <person name="Moshrefi A."/>
            <person name="Mount S.M."/>
            <person name="Moy M."/>
            <person name="Murphy B."/>
            <person name="Murphy L."/>
            <person name="Muzny D.M."/>
            <person name="Nelson D.L."/>
            <person name="Nelson D.R."/>
            <person name="Nelson K.A."/>
            <person name="Nixon K."/>
            <person name="Nusskern D.R."/>
            <person name="Pacleb J.M."/>
            <person name="Palazzolo M."/>
            <person name="Pittman G.S."/>
            <person name="Pan S."/>
            <person name="Pollard J."/>
            <person name="Puri V."/>
            <person name="Reese M.G."/>
            <person name="Reinert K."/>
            <person name="Remington K."/>
            <person name="Saunders R.D.C."/>
            <person name="Scheeler F."/>
            <person name="Shen H."/>
            <person name="Shue B.C."/>
            <person name="Siden-Kiamos I."/>
            <person name="Simpson M."/>
            <person name="Skupski M.P."/>
            <person name="Smith T.J."/>
            <person name="Spier E."/>
            <person name="Spradling A.C."/>
            <person name="Stapleton M."/>
            <person name="Strong R."/>
            <person name="Sun E."/>
            <person name="Svirskas R."/>
            <person name="Tector C."/>
            <person name="Turner R."/>
            <person name="Venter E."/>
            <person name="Wang A.H."/>
            <person name="Wang X."/>
            <person name="Wang Z.-Y."/>
            <person name="Wassarman D.A."/>
            <person name="Weinstock G.M."/>
            <person name="Weissenbach J."/>
            <person name="Williams S.M."/>
            <person name="Woodage T."/>
            <person name="Worley K.C."/>
            <person name="Wu D."/>
            <person name="Yang S."/>
            <person name="Yao Q.A."/>
            <person name="Ye J."/>
            <person name="Yeh R.-F."/>
            <person name="Zaveri J.S."/>
            <person name="Zhan M."/>
            <person name="Zhang G."/>
            <person name="Zhao Q."/>
            <person name="Zheng L."/>
            <person name="Zheng X.H."/>
            <person name="Zhong F.N."/>
            <person name="Zhong W."/>
            <person name="Zhou X."/>
            <person name="Zhu S.C."/>
            <person name="Zhu X."/>
            <person name="Smith H.O."/>
            <person name="Gibbs R.A."/>
            <person name="Myers E.W."/>
            <person name="Rubin G.M."/>
            <person name="Venter J.C."/>
        </authorList>
    </citation>
    <scope>NUCLEOTIDE SEQUENCE [LARGE SCALE GENOMIC DNA]</scope>
    <source>
        <strain evidence="4">Berkeley</strain>
    </source>
</reference>
<reference evidence="7" key="2">
    <citation type="journal article" date="2002" name="Genome Biol.">
        <title>Annotation of the Drosophila melanogaster euchromatic genome: a systematic review.</title>
        <authorList>
            <person name="Misra S."/>
            <person name="Crosby M.A."/>
            <person name="Mungall C.J."/>
            <person name="Matthews B.B."/>
            <person name="Campbell K.S."/>
            <person name="Hradecky P."/>
            <person name="Huang Y."/>
            <person name="Kaminker J.S."/>
            <person name="Millburn G.H."/>
            <person name="Prochnik S.E."/>
            <person name="Smith C.D."/>
            <person name="Tupy J.L."/>
            <person name="Whitfield E.J."/>
            <person name="Bayraktaroglu L."/>
            <person name="Berman B.P."/>
            <person name="Bettencourt B.R."/>
            <person name="Celniker S.E."/>
            <person name="de Grey A.D.N.J."/>
            <person name="Drysdale R.A."/>
            <person name="Harris N.L."/>
            <person name="Richter J."/>
            <person name="Russo S."/>
            <person name="Schroeder A.J."/>
            <person name="Shu S.Q."/>
            <person name="Stapleton M."/>
            <person name="Yamada C."/>
            <person name="Ashburner M."/>
            <person name="Gelbart W.M."/>
            <person name="Rubin G.M."/>
            <person name="Lewis S.E."/>
        </authorList>
    </citation>
    <scope>GENOME REANNOTATION</scope>
    <source>
        <strain evidence="6">Berkeley</strain>
    </source>
</reference>
<reference evidence="7" key="3">
    <citation type="journal article" date="2002" name="Genome Biol.">
        <title>A Drosophila full-length cDNA resource.</title>
        <authorList>
            <person name="Stapleton M."/>
            <person name="Carlson J.W."/>
            <person name="Brokstein P."/>
            <person name="Yu C."/>
            <person name="Champe M."/>
            <person name="George R.A."/>
            <person name="Guarin H."/>
            <person name="Kronmiller B."/>
            <person name="Pacleb J.M."/>
            <person name="Park S."/>
            <person name="Wan K.H."/>
            <person name="Rubin G.M."/>
            <person name="Celniker S.E."/>
        </authorList>
    </citation>
    <scope>NUCLEOTIDE SEQUENCE [LARGE SCALE MRNA]</scope>
    <source>
        <strain evidence="5">Berkeley</strain>
        <tissue evidence="5">Embryo</tissue>
    </source>
</reference>
<protein>
    <recommendedName>
        <fullName>Probable G-protein coupled receptor Mth-like 14</fullName>
    </recommendedName>
    <alternativeName>
        <fullName>Protein methuselah-like 14</fullName>
    </alternativeName>
</protein>
<feature type="signal peptide" evidence="2">
    <location>
        <begin position="1"/>
        <end position="23"/>
    </location>
</feature>
<feature type="chain" id="PRO_0000013036" description="Probable G-protein coupled receptor Mth-like 14">
    <location>
        <begin position="24"/>
        <end position="533"/>
    </location>
</feature>
<feature type="topological domain" description="Extracellular" evidence="2">
    <location>
        <begin position="24"/>
        <end position="242"/>
    </location>
</feature>
<feature type="transmembrane region" description="Helical; Name=1" evidence="2">
    <location>
        <begin position="243"/>
        <end position="263"/>
    </location>
</feature>
<feature type="topological domain" description="Cytoplasmic" evidence="2">
    <location>
        <begin position="264"/>
        <end position="279"/>
    </location>
</feature>
<feature type="transmembrane region" description="Helical; Name=2" evidence="2">
    <location>
        <begin position="280"/>
        <end position="300"/>
    </location>
</feature>
<feature type="topological domain" description="Extracellular" evidence="2">
    <location>
        <begin position="301"/>
        <end position="303"/>
    </location>
</feature>
<feature type="transmembrane region" description="Helical; Name=3" evidence="2">
    <location>
        <begin position="304"/>
        <end position="324"/>
    </location>
</feature>
<feature type="topological domain" description="Cytoplasmic" evidence="2">
    <location>
        <begin position="325"/>
        <end position="347"/>
    </location>
</feature>
<feature type="transmembrane region" description="Helical; Name=4" evidence="2">
    <location>
        <begin position="348"/>
        <end position="368"/>
    </location>
</feature>
<feature type="topological domain" description="Extracellular" evidence="2">
    <location>
        <begin position="369"/>
        <end position="395"/>
    </location>
</feature>
<feature type="transmembrane region" description="Helical; Name=5" evidence="2">
    <location>
        <begin position="396"/>
        <end position="416"/>
    </location>
</feature>
<feature type="topological domain" description="Cytoplasmic" evidence="2">
    <location>
        <begin position="417"/>
        <end position="451"/>
    </location>
</feature>
<feature type="transmembrane region" description="Helical; Name=6" evidence="2">
    <location>
        <begin position="452"/>
        <end position="472"/>
    </location>
</feature>
<feature type="topological domain" description="Extracellular" evidence="2">
    <location>
        <begin position="473"/>
        <end position="480"/>
    </location>
</feature>
<feature type="transmembrane region" description="Helical; Name=7" evidence="2">
    <location>
        <begin position="481"/>
        <end position="501"/>
    </location>
</feature>
<feature type="topological domain" description="Cytoplasmic" evidence="2">
    <location>
        <begin position="502"/>
        <end position="533"/>
    </location>
</feature>
<feature type="region of interest" description="Disordered" evidence="3">
    <location>
        <begin position="86"/>
        <end position="108"/>
    </location>
</feature>
<feature type="glycosylation site" description="N-linked (GlcNAc...) asparagine" evidence="2">
    <location>
        <position position="20"/>
    </location>
</feature>
<feature type="glycosylation site" description="N-linked (GlcNAc...) asparagine" evidence="2">
    <location>
        <position position="29"/>
    </location>
</feature>
<feature type="glycosylation site" description="N-linked (GlcNAc...) asparagine" evidence="2">
    <location>
        <position position="30"/>
    </location>
</feature>
<feature type="glycosylation site" description="N-linked (GlcNAc...) asparagine" evidence="2">
    <location>
        <position position="36"/>
    </location>
</feature>
<feature type="glycosylation site" description="N-linked (GlcNAc...) asparagine" evidence="2">
    <location>
        <position position="47"/>
    </location>
</feature>
<feature type="glycosylation site" description="N-linked (GlcNAc...) asparagine" evidence="2">
    <location>
        <position position="133"/>
    </location>
</feature>
<feature type="glycosylation site" description="N-linked (GlcNAc...) asparagine" evidence="2">
    <location>
        <position position="178"/>
    </location>
</feature>
<feature type="glycosylation site" description="N-linked (GlcNAc...) asparagine" evidence="2">
    <location>
        <position position="206"/>
    </location>
</feature>
<feature type="disulfide bond" evidence="1">
    <location>
        <begin position="120"/>
        <end position="216"/>
    </location>
</feature>
<accession>Q8SYV9</accession>
<comment type="subcellular location">
    <subcellularLocation>
        <location evidence="7">Cell membrane</location>
        <topology evidence="7">Multi-pass membrane protein</topology>
    </subcellularLocation>
</comment>
<comment type="similarity">
    <text evidence="7">Belongs to the G-protein coupled receptor 2 family. Mth subfamily.</text>
</comment>
<proteinExistence type="evidence at transcript level"/>
<organism evidence="8">
    <name type="scientific">Drosophila melanogaster</name>
    <name type="common">Fruit fly</name>
    <dbReference type="NCBI Taxonomy" id="7227"/>
    <lineage>
        <taxon>Eukaryota</taxon>
        <taxon>Metazoa</taxon>
        <taxon>Ecdysozoa</taxon>
        <taxon>Arthropoda</taxon>
        <taxon>Hexapoda</taxon>
        <taxon>Insecta</taxon>
        <taxon>Pterygota</taxon>
        <taxon>Neoptera</taxon>
        <taxon>Endopterygota</taxon>
        <taxon>Diptera</taxon>
        <taxon>Brachycera</taxon>
        <taxon>Muscomorpha</taxon>
        <taxon>Ephydroidea</taxon>
        <taxon>Drosophilidae</taxon>
        <taxon>Drosophila</taxon>
        <taxon>Sophophora</taxon>
    </lineage>
</organism>
<gene>
    <name type="primary">mthl14</name>
    <name type="ORF">CG32476</name>
</gene>
<sequence>MNLGHWNFLLALISLQTFFNASAQISTVNNSSKGSNNSNIFHEDTFNSTSIDVLDASIHSTLVVPQTYSTEAATISGARFATSVPVQSPVDNPLDPADCSQREKYRKQPVATPSSRLRKCCPHGENLNIYRENQSDSMCDNGLLSFEPTIISAVLFDNCIEDLEVETTLDYDIGNPCNSSLLYDDKDDVFFVLQDGSLLIIDKFGNESYTVKEHYCLDIDKSGHLFAFTCVTQVEEQIAFAKVVFVAVLMLISMPCLLLVSYLHMTLRLLRNLHGLSLSLMSLCLASGYFVHSVVHIYGIPNQGFIGYVIQFCILSYFFWYLCICFNVLLNVWYKLPCCIQCSKSWATFNFACYAVFAFSGPATIVALTVQKGLPGMPSYFLQGLTESIRDSQRYFIPPVSTILFLSFLLNIISFFGFQRISGYAKAEKNIQERKCLFDQQKYEDVKKDAKCVSLLGIIMVVSWLLEIITFYSGSNSNYLILCDMVNGLQGVWVLLIFLVVRRRRTIILRWWYDRGSHEIEGTELQALSNSPT</sequence>
<dbReference type="EMBL" id="AY071287">
    <property type="protein sequence ID" value="AAL48909.1"/>
    <property type="molecule type" value="mRNA"/>
</dbReference>
<dbReference type="EMBL" id="AE014296">
    <property type="protein sequence ID" value="AAN11432.1"/>
    <property type="molecule type" value="Genomic_DNA"/>
</dbReference>
<dbReference type="RefSeq" id="NP_728509.1">
    <property type="nucleotide sequence ID" value="NM_167821.3"/>
</dbReference>
<dbReference type="FunCoup" id="Q8SYV9">
    <property type="interactions" value="39"/>
</dbReference>
<dbReference type="STRING" id="7227.FBpp0072402"/>
<dbReference type="GlyCosmos" id="Q8SYV9">
    <property type="glycosylation" value="8 sites, No reported glycans"/>
</dbReference>
<dbReference type="GlyGen" id="Q8SYV9">
    <property type="glycosylation" value="9 sites"/>
</dbReference>
<dbReference type="PaxDb" id="7227-FBpp0072402"/>
<dbReference type="DNASU" id="318046"/>
<dbReference type="EnsemblMetazoa" id="FBtr0072501">
    <property type="protein sequence ID" value="FBpp0072402"/>
    <property type="gene ID" value="FBgn0052476"/>
</dbReference>
<dbReference type="GeneID" id="318046"/>
<dbReference type="KEGG" id="dme:Dmel_CG32476"/>
<dbReference type="AGR" id="FB:FBgn0052476"/>
<dbReference type="CTD" id="318046"/>
<dbReference type="FlyBase" id="FBgn0052476">
    <property type="gene designation" value="mthl14"/>
</dbReference>
<dbReference type="VEuPathDB" id="VectorBase:FBgn0052476"/>
<dbReference type="eggNOG" id="ENOG502TB76">
    <property type="taxonomic scope" value="Eukaryota"/>
</dbReference>
<dbReference type="GeneTree" id="ENSGT00940000162103"/>
<dbReference type="HOGENOM" id="CLU_035859_0_0_1"/>
<dbReference type="InParanoid" id="Q8SYV9"/>
<dbReference type="OMA" id="DRGSHEI"/>
<dbReference type="OrthoDB" id="5854379at2759"/>
<dbReference type="PhylomeDB" id="Q8SYV9"/>
<dbReference type="BioGRID-ORCS" id="318046">
    <property type="hits" value="0 hits in 1 CRISPR screen"/>
</dbReference>
<dbReference type="GenomeRNAi" id="318046"/>
<dbReference type="PRO" id="PR:Q8SYV9"/>
<dbReference type="Proteomes" id="UP000000803">
    <property type="component" value="Chromosome 3L"/>
</dbReference>
<dbReference type="Bgee" id="FBgn0052476">
    <property type="expression patterns" value="Expressed in adult middle midgut class I enteroendocrine cell in adult midgut (Drosophila) and 57 other cell types or tissues"/>
</dbReference>
<dbReference type="GO" id="GO:0016020">
    <property type="term" value="C:membrane"/>
    <property type="evidence" value="ECO:0000250"/>
    <property type="project" value="FlyBase"/>
</dbReference>
<dbReference type="GO" id="GO:0005886">
    <property type="term" value="C:plasma membrane"/>
    <property type="evidence" value="ECO:0007669"/>
    <property type="project" value="UniProtKB-SubCell"/>
</dbReference>
<dbReference type="GO" id="GO:0004930">
    <property type="term" value="F:G protein-coupled receptor activity"/>
    <property type="evidence" value="ECO:0000250"/>
    <property type="project" value="FlyBase"/>
</dbReference>
<dbReference type="GO" id="GO:0007186">
    <property type="term" value="P:G protein-coupled receptor signaling pathway"/>
    <property type="evidence" value="ECO:0000250"/>
    <property type="project" value="FlyBase"/>
</dbReference>
<dbReference type="CDD" id="cd15039">
    <property type="entry name" value="7tmB3_Methuselah-like"/>
    <property type="match status" value="1"/>
</dbReference>
<dbReference type="FunFam" id="1.20.1070.10:FF:000642">
    <property type="entry name" value="GD11003"/>
    <property type="match status" value="1"/>
</dbReference>
<dbReference type="Gene3D" id="2.170.180.11">
    <property type="entry name" value="Methuselah ectodomain, domain 2"/>
    <property type="match status" value="1"/>
</dbReference>
<dbReference type="Gene3D" id="1.20.1070.10">
    <property type="entry name" value="Rhodopsin 7-helix transmembrane proteins"/>
    <property type="match status" value="1"/>
</dbReference>
<dbReference type="InterPro" id="IPR052808">
    <property type="entry name" value="GPCR_Mth-like"/>
</dbReference>
<dbReference type="InterPro" id="IPR023311">
    <property type="entry name" value="Methusela_ecto_dom_2"/>
</dbReference>
<dbReference type="InterPro" id="IPR036272">
    <property type="entry name" value="Methuselah_N_sf"/>
</dbReference>
<dbReference type="PANTHER" id="PTHR46953">
    <property type="entry name" value="G-PROTEIN COUPLED RECEPTOR MTH-LIKE 1-RELATED"/>
    <property type="match status" value="1"/>
</dbReference>
<dbReference type="PANTHER" id="PTHR46953:SF3">
    <property type="entry name" value="G-PROTEIN COUPLED RECEPTOR MTH-LIKE 14-RELATED"/>
    <property type="match status" value="1"/>
</dbReference>
<dbReference type="SUPFAM" id="SSF63877">
    <property type="entry name" value="Methuselah ectodomain"/>
    <property type="match status" value="1"/>
</dbReference>
<name>MTH14_DROME</name>
<evidence type="ECO:0000250" key="1">
    <source>
        <dbReference type="UniProtKB" id="O97148"/>
    </source>
</evidence>
<evidence type="ECO:0000255" key="2"/>
<evidence type="ECO:0000256" key="3">
    <source>
        <dbReference type="SAM" id="MobiDB-lite"/>
    </source>
</evidence>
<evidence type="ECO:0000269" key="4">
    <source>
    </source>
</evidence>
<evidence type="ECO:0000269" key="5">
    <source>
    </source>
</evidence>
<evidence type="ECO:0000269" key="6">
    <source>
    </source>
</evidence>
<evidence type="ECO:0000305" key="7"/>
<evidence type="ECO:0000312" key="8">
    <source>
        <dbReference type="EMBL" id="AAL48909.1"/>
    </source>
</evidence>
<keyword id="KW-1003">Cell membrane</keyword>
<keyword id="KW-1015">Disulfide bond</keyword>
<keyword id="KW-0297">G-protein coupled receptor</keyword>
<keyword id="KW-0325">Glycoprotein</keyword>
<keyword id="KW-0472">Membrane</keyword>
<keyword id="KW-0675">Receptor</keyword>
<keyword id="KW-1185">Reference proteome</keyword>
<keyword id="KW-0732">Signal</keyword>
<keyword id="KW-0807">Transducer</keyword>
<keyword id="KW-0812">Transmembrane</keyword>
<keyword id="KW-1133">Transmembrane helix</keyword>